<sequence>MSNVTRQPKIGFVSLGCPKNLVDSERILTELRTEGYDVVPSYDDADMVIVNTCGFIDSAVQESLEAIGEALTENGKVIVTGCLGAKVDQIREVHPKVLEITGPHSYEQVLEHVHHYVPKPKHNPFLSLVPEQGVKLTPRHYAYLKISEGCNHRCTFCIIPSMRGDLVSRPIGEVLSEAKRLVDAGVKEILVISQDTSAYGVDVKHRTGFHNGEPVKTSMVDLCEQLSKLGIWTRLHYVYPYPHVDDVIPLMAEGKILPYLDIPLQHASPRILKLMKRPGAVDRQLARIKQWREICPELTLRSTFIVGFPGETEDDFQMLLDFLKEARLDRVGCFKYSPVEGAGANALPDQVPEEVKEERWNRFMQLQQQISAERLQEKVGREILVIIDEVDKEGAIGRSMADAPEIDGAVYLNGETNVKPGDVIRVKVDNADEYDLWGSRV</sequence>
<keyword id="KW-0004">4Fe-4S</keyword>
<keyword id="KW-0963">Cytoplasm</keyword>
<keyword id="KW-0408">Iron</keyword>
<keyword id="KW-0411">Iron-sulfur</keyword>
<keyword id="KW-0479">Metal-binding</keyword>
<keyword id="KW-1185">Reference proteome</keyword>
<keyword id="KW-0949">S-adenosyl-L-methionine</keyword>
<keyword id="KW-0808">Transferase</keyword>
<gene>
    <name evidence="1" type="primary">rimO</name>
    <name type="ordered locus">CKO_02276</name>
</gene>
<protein>
    <recommendedName>
        <fullName evidence="1">Ribosomal protein uS12 methylthiotransferase RimO</fullName>
        <shortName evidence="1">uS12 MTTase</shortName>
        <shortName evidence="1">uS12 methylthiotransferase</shortName>
        <ecNumber evidence="1">2.8.4.4</ecNumber>
    </recommendedName>
    <alternativeName>
        <fullName evidence="1">Ribosomal protein uS12 (aspartate-C(3))-methylthiotransferase</fullName>
    </alternativeName>
    <alternativeName>
        <fullName evidence="1">Ribosome maturation factor RimO</fullName>
    </alternativeName>
</protein>
<organism>
    <name type="scientific">Citrobacter koseri (strain ATCC BAA-895 / CDC 4225-83 / SGSC4696)</name>
    <dbReference type="NCBI Taxonomy" id="290338"/>
    <lineage>
        <taxon>Bacteria</taxon>
        <taxon>Pseudomonadati</taxon>
        <taxon>Pseudomonadota</taxon>
        <taxon>Gammaproteobacteria</taxon>
        <taxon>Enterobacterales</taxon>
        <taxon>Enterobacteriaceae</taxon>
        <taxon>Citrobacter</taxon>
    </lineage>
</organism>
<name>RIMO_CITK8</name>
<reference key="1">
    <citation type="submission" date="2007-08" db="EMBL/GenBank/DDBJ databases">
        <authorList>
            <consortium name="The Citrobacter koseri Genome Sequencing Project"/>
            <person name="McClelland M."/>
            <person name="Sanderson E.K."/>
            <person name="Porwollik S."/>
            <person name="Spieth J."/>
            <person name="Clifton W.S."/>
            <person name="Latreille P."/>
            <person name="Courtney L."/>
            <person name="Wang C."/>
            <person name="Pepin K."/>
            <person name="Bhonagiri V."/>
            <person name="Nash W."/>
            <person name="Johnson M."/>
            <person name="Thiruvilangam P."/>
            <person name="Wilson R."/>
        </authorList>
    </citation>
    <scope>NUCLEOTIDE SEQUENCE [LARGE SCALE GENOMIC DNA]</scope>
    <source>
        <strain>ATCC BAA-895 / CDC 4225-83 / SGSC4696</strain>
    </source>
</reference>
<comment type="function">
    <text evidence="1">Catalyzes the methylthiolation of an aspartic acid residue of ribosomal protein uS12.</text>
</comment>
<comment type="catalytic activity">
    <reaction evidence="1">
        <text>L-aspartate(89)-[ribosomal protein uS12]-hydrogen + (sulfur carrier)-SH + AH2 + 2 S-adenosyl-L-methionine = 3-methylsulfanyl-L-aspartate(89)-[ribosomal protein uS12]-hydrogen + (sulfur carrier)-H + 5'-deoxyadenosine + L-methionine + A + S-adenosyl-L-homocysteine + 2 H(+)</text>
        <dbReference type="Rhea" id="RHEA:37087"/>
        <dbReference type="Rhea" id="RHEA-COMP:10460"/>
        <dbReference type="Rhea" id="RHEA-COMP:10461"/>
        <dbReference type="Rhea" id="RHEA-COMP:14737"/>
        <dbReference type="Rhea" id="RHEA-COMP:14739"/>
        <dbReference type="ChEBI" id="CHEBI:13193"/>
        <dbReference type="ChEBI" id="CHEBI:15378"/>
        <dbReference type="ChEBI" id="CHEBI:17319"/>
        <dbReference type="ChEBI" id="CHEBI:17499"/>
        <dbReference type="ChEBI" id="CHEBI:29917"/>
        <dbReference type="ChEBI" id="CHEBI:29961"/>
        <dbReference type="ChEBI" id="CHEBI:57844"/>
        <dbReference type="ChEBI" id="CHEBI:57856"/>
        <dbReference type="ChEBI" id="CHEBI:59789"/>
        <dbReference type="ChEBI" id="CHEBI:64428"/>
        <dbReference type="ChEBI" id="CHEBI:73599"/>
        <dbReference type="EC" id="2.8.4.4"/>
    </reaction>
</comment>
<comment type="cofactor">
    <cofactor evidence="1">
        <name>[4Fe-4S] cluster</name>
        <dbReference type="ChEBI" id="CHEBI:49883"/>
    </cofactor>
    <text evidence="1">Binds 2 [4Fe-4S] clusters. One cluster is coordinated with 3 cysteines and an exchangeable S-adenosyl-L-methionine.</text>
</comment>
<comment type="subcellular location">
    <subcellularLocation>
        <location evidence="1">Cytoplasm</location>
    </subcellularLocation>
</comment>
<comment type="similarity">
    <text evidence="1">Belongs to the methylthiotransferase family. RimO subfamily.</text>
</comment>
<comment type="sequence caution" evidence="3">
    <conflict type="erroneous initiation">
        <sequence resource="EMBL-CDS" id="ABV13398"/>
    </conflict>
</comment>
<dbReference type="EC" id="2.8.4.4" evidence="1"/>
<dbReference type="EMBL" id="CP000822">
    <property type="protein sequence ID" value="ABV13398.1"/>
    <property type="status" value="ALT_INIT"/>
    <property type="molecule type" value="Genomic_DNA"/>
</dbReference>
<dbReference type="RefSeq" id="WP_024130502.1">
    <property type="nucleotide sequence ID" value="NC_009792.1"/>
</dbReference>
<dbReference type="SMR" id="A8AIT5"/>
<dbReference type="STRING" id="290338.CKO_02276"/>
<dbReference type="GeneID" id="45136192"/>
<dbReference type="KEGG" id="cko:CKO_02276"/>
<dbReference type="HOGENOM" id="CLU_018697_3_2_6"/>
<dbReference type="OrthoDB" id="9805215at2"/>
<dbReference type="Proteomes" id="UP000008148">
    <property type="component" value="Chromosome"/>
</dbReference>
<dbReference type="GO" id="GO:0005829">
    <property type="term" value="C:cytosol"/>
    <property type="evidence" value="ECO:0007669"/>
    <property type="project" value="TreeGrafter"/>
</dbReference>
<dbReference type="GO" id="GO:0051539">
    <property type="term" value="F:4 iron, 4 sulfur cluster binding"/>
    <property type="evidence" value="ECO:0007669"/>
    <property type="project" value="UniProtKB-UniRule"/>
</dbReference>
<dbReference type="GO" id="GO:0035599">
    <property type="term" value="F:aspartic acid methylthiotransferase activity"/>
    <property type="evidence" value="ECO:0007669"/>
    <property type="project" value="TreeGrafter"/>
</dbReference>
<dbReference type="GO" id="GO:0046872">
    <property type="term" value="F:metal ion binding"/>
    <property type="evidence" value="ECO:0007669"/>
    <property type="project" value="UniProtKB-KW"/>
</dbReference>
<dbReference type="GO" id="GO:0103039">
    <property type="term" value="F:protein methylthiotransferase activity"/>
    <property type="evidence" value="ECO:0007669"/>
    <property type="project" value="UniProtKB-EC"/>
</dbReference>
<dbReference type="GO" id="GO:0006400">
    <property type="term" value="P:tRNA modification"/>
    <property type="evidence" value="ECO:0007669"/>
    <property type="project" value="InterPro"/>
</dbReference>
<dbReference type="CDD" id="cd01335">
    <property type="entry name" value="Radical_SAM"/>
    <property type="match status" value="1"/>
</dbReference>
<dbReference type="FunFam" id="2.40.50.140:FF:000060">
    <property type="entry name" value="Ribosomal protein S12 methylthiotransferase RimO"/>
    <property type="match status" value="1"/>
</dbReference>
<dbReference type="FunFam" id="3.40.50.12160:FF:000002">
    <property type="entry name" value="Ribosomal protein S12 methylthiotransferase RimO"/>
    <property type="match status" value="1"/>
</dbReference>
<dbReference type="FunFam" id="3.80.30.20:FF:000001">
    <property type="entry name" value="tRNA-2-methylthio-N(6)-dimethylallyladenosine synthase 2"/>
    <property type="match status" value="1"/>
</dbReference>
<dbReference type="Gene3D" id="3.40.50.12160">
    <property type="entry name" value="Methylthiotransferase, N-terminal domain"/>
    <property type="match status" value="1"/>
</dbReference>
<dbReference type="Gene3D" id="2.40.50.140">
    <property type="entry name" value="Nucleic acid-binding proteins"/>
    <property type="match status" value="1"/>
</dbReference>
<dbReference type="Gene3D" id="3.80.30.20">
    <property type="entry name" value="tm_1862 like domain"/>
    <property type="match status" value="1"/>
</dbReference>
<dbReference type="HAMAP" id="MF_01865">
    <property type="entry name" value="MTTase_RimO"/>
    <property type="match status" value="1"/>
</dbReference>
<dbReference type="InterPro" id="IPR006638">
    <property type="entry name" value="Elp3/MiaA/NifB-like_rSAM"/>
</dbReference>
<dbReference type="InterPro" id="IPR005839">
    <property type="entry name" value="Methylthiotransferase"/>
</dbReference>
<dbReference type="InterPro" id="IPR020612">
    <property type="entry name" value="Methylthiotransferase_CS"/>
</dbReference>
<dbReference type="InterPro" id="IPR013848">
    <property type="entry name" value="Methylthiotransferase_N"/>
</dbReference>
<dbReference type="InterPro" id="IPR038135">
    <property type="entry name" value="Methylthiotransferase_N_sf"/>
</dbReference>
<dbReference type="InterPro" id="IPR012340">
    <property type="entry name" value="NA-bd_OB-fold"/>
</dbReference>
<dbReference type="InterPro" id="IPR005840">
    <property type="entry name" value="Ribosomal_uS12_MeSTrfase_RimO"/>
</dbReference>
<dbReference type="InterPro" id="IPR007197">
    <property type="entry name" value="rSAM"/>
</dbReference>
<dbReference type="InterPro" id="IPR023404">
    <property type="entry name" value="rSAM_horseshoe"/>
</dbReference>
<dbReference type="InterPro" id="IPR002792">
    <property type="entry name" value="TRAM_dom"/>
</dbReference>
<dbReference type="NCBIfam" id="TIGR01125">
    <property type="entry name" value="30S ribosomal protein S12 methylthiotransferase RimO"/>
    <property type="match status" value="1"/>
</dbReference>
<dbReference type="NCBIfam" id="TIGR00089">
    <property type="entry name" value="MiaB/RimO family radical SAM methylthiotransferase"/>
    <property type="match status" value="1"/>
</dbReference>
<dbReference type="PANTHER" id="PTHR43837">
    <property type="entry name" value="RIBOSOMAL PROTEIN S12 METHYLTHIOTRANSFERASE RIMO"/>
    <property type="match status" value="1"/>
</dbReference>
<dbReference type="PANTHER" id="PTHR43837:SF1">
    <property type="entry name" value="RIBOSOMAL PROTEIN US12 METHYLTHIOTRANSFERASE RIMO"/>
    <property type="match status" value="1"/>
</dbReference>
<dbReference type="Pfam" id="PF04055">
    <property type="entry name" value="Radical_SAM"/>
    <property type="match status" value="1"/>
</dbReference>
<dbReference type="Pfam" id="PF18693">
    <property type="entry name" value="TRAM_2"/>
    <property type="match status" value="1"/>
</dbReference>
<dbReference type="Pfam" id="PF00919">
    <property type="entry name" value="UPF0004"/>
    <property type="match status" value="1"/>
</dbReference>
<dbReference type="SFLD" id="SFLDG01082">
    <property type="entry name" value="B12-binding_domain_containing"/>
    <property type="match status" value="1"/>
</dbReference>
<dbReference type="SFLD" id="SFLDG01061">
    <property type="entry name" value="methylthiotransferase"/>
    <property type="match status" value="1"/>
</dbReference>
<dbReference type="SFLD" id="SFLDF00274">
    <property type="entry name" value="ribosomal_protein_S12_methylth"/>
    <property type="match status" value="1"/>
</dbReference>
<dbReference type="SMART" id="SM00729">
    <property type="entry name" value="Elp3"/>
    <property type="match status" value="1"/>
</dbReference>
<dbReference type="SUPFAM" id="SSF102114">
    <property type="entry name" value="Radical SAM enzymes"/>
    <property type="match status" value="1"/>
</dbReference>
<dbReference type="PROSITE" id="PS51449">
    <property type="entry name" value="MTTASE_N"/>
    <property type="match status" value="1"/>
</dbReference>
<dbReference type="PROSITE" id="PS01278">
    <property type="entry name" value="MTTASE_RADICAL"/>
    <property type="match status" value="1"/>
</dbReference>
<dbReference type="PROSITE" id="PS51918">
    <property type="entry name" value="RADICAL_SAM"/>
    <property type="match status" value="1"/>
</dbReference>
<dbReference type="PROSITE" id="PS50926">
    <property type="entry name" value="TRAM"/>
    <property type="match status" value="1"/>
</dbReference>
<proteinExistence type="inferred from homology"/>
<evidence type="ECO:0000255" key="1">
    <source>
        <dbReference type="HAMAP-Rule" id="MF_01865"/>
    </source>
</evidence>
<evidence type="ECO:0000255" key="2">
    <source>
        <dbReference type="PROSITE-ProRule" id="PRU01266"/>
    </source>
</evidence>
<evidence type="ECO:0000305" key="3"/>
<feature type="chain" id="PRO_0000374773" description="Ribosomal protein uS12 methylthiotransferase RimO">
    <location>
        <begin position="1"/>
        <end position="441"/>
    </location>
</feature>
<feature type="domain" description="MTTase N-terminal" evidence="1">
    <location>
        <begin position="8"/>
        <end position="118"/>
    </location>
</feature>
<feature type="domain" description="Radical SAM core" evidence="2">
    <location>
        <begin position="136"/>
        <end position="373"/>
    </location>
</feature>
<feature type="domain" description="TRAM" evidence="1">
    <location>
        <begin position="376"/>
        <end position="441"/>
    </location>
</feature>
<feature type="binding site" evidence="1">
    <location>
        <position position="17"/>
    </location>
    <ligand>
        <name>[4Fe-4S] cluster</name>
        <dbReference type="ChEBI" id="CHEBI:49883"/>
        <label>1</label>
    </ligand>
</feature>
<feature type="binding site" evidence="1">
    <location>
        <position position="53"/>
    </location>
    <ligand>
        <name>[4Fe-4S] cluster</name>
        <dbReference type="ChEBI" id="CHEBI:49883"/>
        <label>1</label>
    </ligand>
</feature>
<feature type="binding site" evidence="1">
    <location>
        <position position="82"/>
    </location>
    <ligand>
        <name>[4Fe-4S] cluster</name>
        <dbReference type="ChEBI" id="CHEBI:49883"/>
        <label>1</label>
    </ligand>
</feature>
<feature type="binding site" evidence="1">
    <location>
        <position position="150"/>
    </location>
    <ligand>
        <name>[4Fe-4S] cluster</name>
        <dbReference type="ChEBI" id="CHEBI:49883"/>
        <label>2</label>
        <note>4Fe-4S-S-AdoMet</note>
    </ligand>
</feature>
<feature type="binding site" evidence="1">
    <location>
        <position position="154"/>
    </location>
    <ligand>
        <name>[4Fe-4S] cluster</name>
        <dbReference type="ChEBI" id="CHEBI:49883"/>
        <label>2</label>
        <note>4Fe-4S-S-AdoMet</note>
    </ligand>
</feature>
<feature type="binding site" evidence="1">
    <location>
        <position position="157"/>
    </location>
    <ligand>
        <name>[4Fe-4S] cluster</name>
        <dbReference type="ChEBI" id="CHEBI:49883"/>
        <label>2</label>
        <note>4Fe-4S-S-AdoMet</note>
    </ligand>
</feature>
<accession>A8AIT5</accession>